<evidence type="ECO:0000250" key="1"/>
<evidence type="ECO:0000250" key="2">
    <source>
        <dbReference type="UniProtKB" id="Q71FD5"/>
    </source>
</evidence>
<evidence type="ECO:0000255" key="3">
    <source>
        <dbReference type="PROSITE-ProRule" id="PRU00175"/>
    </source>
</evidence>
<evidence type="ECO:0000256" key="4">
    <source>
        <dbReference type="SAM" id="MobiDB-lite"/>
    </source>
</evidence>
<evidence type="ECO:0000269" key="5">
    <source>
    </source>
</evidence>
<evidence type="ECO:0000269" key="6">
    <source>
    </source>
</evidence>
<evidence type="ECO:0000269" key="7">
    <source>
    </source>
</evidence>
<evidence type="ECO:0000269" key="8">
    <source>
    </source>
</evidence>
<evidence type="ECO:0000305" key="9"/>
<evidence type="ECO:0000305" key="10">
    <source>
    </source>
</evidence>
<evidence type="ECO:0007744" key="11">
    <source>
    </source>
</evidence>
<evidence type="ECO:0007744" key="12">
    <source>
    </source>
</evidence>
<evidence type="ECO:0007744" key="13">
    <source>
    </source>
</evidence>
<evidence type="ECO:0007744" key="14">
    <source>
    </source>
</evidence>
<evidence type="ECO:0007744" key="15">
    <source>
    </source>
</evidence>
<evidence type="ECO:0007744" key="16">
    <source>
    </source>
</evidence>
<evidence type="ECO:0007744" key="17">
    <source>
    </source>
</evidence>
<keyword id="KW-1003">Cell membrane</keyword>
<keyword id="KW-0966">Cell projection</keyword>
<keyword id="KW-0963">Cytoplasm</keyword>
<keyword id="KW-0967">Endosome</keyword>
<keyword id="KW-0449">Lipoprotein</keyword>
<keyword id="KW-0458">Lysosome</keyword>
<keyword id="KW-0472">Membrane</keyword>
<keyword id="KW-0479">Metal-binding</keyword>
<keyword id="KW-0519">Myristate</keyword>
<keyword id="KW-0597">Phosphoprotein</keyword>
<keyword id="KW-1267">Proteomics identification</keyword>
<keyword id="KW-1185">Reference proteome</keyword>
<keyword id="KW-0770">Synapse</keyword>
<keyword id="KW-0808">Transferase</keyword>
<keyword id="KW-0833">Ubl conjugation pathway</keyword>
<keyword id="KW-0862">Zinc</keyword>
<keyword id="KW-0863">Zinc-finger</keyword>
<gene>
    <name type="primary">ZNRF2</name>
    <name type="synonym">RNF202</name>
</gene>
<organism>
    <name type="scientific">Homo sapiens</name>
    <name type="common">Human</name>
    <dbReference type="NCBI Taxonomy" id="9606"/>
    <lineage>
        <taxon>Eukaryota</taxon>
        <taxon>Metazoa</taxon>
        <taxon>Chordata</taxon>
        <taxon>Craniata</taxon>
        <taxon>Vertebrata</taxon>
        <taxon>Euteleostomi</taxon>
        <taxon>Mammalia</taxon>
        <taxon>Eutheria</taxon>
        <taxon>Euarchontoglires</taxon>
        <taxon>Primates</taxon>
        <taxon>Haplorrhini</taxon>
        <taxon>Catarrhini</taxon>
        <taxon>Hominidae</taxon>
        <taxon>Homo</taxon>
    </lineage>
</organism>
<dbReference type="EC" id="2.3.2.27" evidence="7"/>
<dbReference type="EMBL" id="AF513707">
    <property type="protein sequence ID" value="AAQ08115.1"/>
    <property type="molecule type" value="mRNA"/>
</dbReference>
<dbReference type="EMBL" id="AF527533">
    <property type="protein sequence ID" value="AAM88868.1"/>
    <property type="molecule type" value="mRNA"/>
</dbReference>
<dbReference type="CCDS" id="CCDS5426.1"/>
<dbReference type="RefSeq" id="NP_667339.1">
    <property type="nucleotide sequence ID" value="NM_147128.4"/>
</dbReference>
<dbReference type="RefSeq" id="XP_047276004.1">
    <property type="nucleotide sequence ID" value="XM_047420048.1"/>
</dbReference>
<dbReference type="RefSeq" id="XP_054213584.1">
    <property type="nucleotide sequence ID" value="XM_054357609.1"/>
</dbReference>
<dbReference type="SMR" id="Q8NHG8"/>
<dbReference type="BioGRID" id="128825">
    <property type="interactions" value="58"/>
</dbReference>
<dbReference type="FunCoup" id="Q8NHG8">
    <property type="interactions" value="1250"/>
</dbReference>
<dbReference type="IntAct" id="Q8NHG8">
    <property type="interactions" value="22"/>
</dbReference>
<dbReference type="MINT" id="Q8NHG8"/>
<dbReference type="STRING" id="9606.ENSP00000323879"/>
<dbReference type="GlyGen" id="Q8NHG8">
    <property type="glycosylation" value="1 site, 1 N-linked glycan (1 site)"/>
</dbReference>
<dbReference type="iPTMnet" id="Q8NHG8"/>
<dbReference type="PhosphoSitePlus" id="Q8NHG8"/>
<dbReference type="BioMuta" id="ZNRF2"/>
<dbReference type="DMDM" id="74762595"/>
<dbReference type="jPOST" id="Q8NHG8"/>
<dbReference type="MassIVE" id="Q8NHG8"/>
<dbReference type="PaxDb" id="9606-ENSP00000323879"/>
<dbReference type="PeptideAtlas" id="Q8NHG8"/>
<dbReference type="ProteomicsDB" id="73707"/>
<dbReference type="Pumba" id="Q8NHG8"/>
<dbReference type="Antibodypedia" id="35132">
    <property type="antibodies" value="114 antibodies from 26 providers"/>
</dbReference>
<dbReference type="DNASU" id="223082"/>
<dbReference type="Ensembl" id="ENST00000323037.5">
    <property type="protein sequence ID" value="ENSP00000323879.4"/>
    <property type="gene ID" value="ENSG00000180233.11"/>
</dbReference>
<dbReference type="GeneID" id="223082"/>
<dbReference type="KEGG" id="hsa:223082"/>
<dbReference type="MANE-Select" id="ENST00000323037.5">
    <property type="protein sequence ID" value="ENSP00000323879.4"/>
    <property type="RefSeq nucleotide sequence ID" value="NM_147128.4"/>
    <property type="RefSeq protein sequence ID" value="NP_667339.1"/>
</dbReference>
<dbReference type="UCSC" id="uc003tat.3">
    <property type="organism name" value="human"/>
</dbReference>
<dbReference type="AGR" id="HGNC:22316"/>
<dbReference type="CTD" id="223082"/>
<dbReference type="DisGeNET" id="223082"/>
<dbReference type="GeneCards" id="ZNRF2"/>
<dbReference type="HGNC" id="HGNC:22316">
    <property type="gene designation" value="ZNRF2"/>
</dbReference>
<dbReference type="HPA" id="ENSG00000180233">
    <property type="expression patterns" value="Low tissue specificity"/>
</dbReference>
<dbReference type="MIM" id="612061">
    <property type="type" value="gene"/>
</dbReference>
<dbReference type="neXtProt" id="NX_Q8NHG8"/>
<dbReference type="OpenTargets" id="ENSG00000180233"/>
<dbReference type="PharmGKB" id="PA134961488"/>
<dbReference type="VEuPathDB" id="HostDB:ENSG00000180233"/>
<dbReference type="eggNOG" id="KOG0801">
    <property type="taxonomic scope" value="Eukaryota"/>
</dbReference>
<dbReference type="GeneTree" id="ENSGT00940000159017"/>
<dbReference type="HOGENOM" id="CLU_062700_2_0_1"/>
<dbReference type="InParanoid" id="Q8NHG8"/>
<dbReference type="OMA" id="RGNDGHR"/>
<dbReference type="OrthoDB" id="10057496at2759"/>
<dbReference type="PAN-GO" id="Q8NHG8">
    <property type="GO annotations" value="6 GO annotations based on evolutionary models"/>
</dbReference>
<dbReference type="PhylomeDB" id="Q8NHG8"/>
<dbReference type="TreeFam" id="TF317681"/>
<dbReference type="PathwayCommons" id="Q8NHG8"/>
<dbReference type="Reactome" id="R-HSA-983168">
    <property type="pathway name" value="Antigen processing: Ubiquitination &amp; Proteasome degradation"/>
</dbReference>
<dbReference type="SignaLink" id="Q8NHG8"/>
<dbReference type="SIGNOR" id="Q8NHG8"/>
<dbReference type="UniPathway" id="UPA00143"/>
<dbReference type="BioGRID-ORCS" id="223082">
    <property type="hits" value="15 hits in 1161 CRISPR screens"/>
</dbReference>
<dbReference type="ChiTaRS" id="ZNRF2">
    <property type="organism name" value="human"/>
</dbReference>
<dbReference type="GenomeRNAi" id="223082"/>
<dbReference type="Pharos" id="Q8NHG8">
    <property type="development level" value="Tbio"/>
</dbReference>
<dbReference type="PRO" id="PR:Q8NHG8"/>
<dbReference type="Proteomes" id="UP000005640">
    <property type="component" value="Chromosome 7"/>
</dbReference>
<dbReference type="RNAct" id="Q8NHG8">
    <property type="molecule type" value="protein"/>
</dbReference>
<dbReference type="Bgee" id="ENSG00000180233">
    <property type="expression patterns" value="Expressed in primordial germ cell in gonad and 154 other cell types or tissues"/>
</dbReference>
<dbReference type="ExpressionAtlas" id="Q8NHG8">
    <property type="expression patterns" value="baseline and differential"/>
</dbReference>
<dbReference type="GO" id="GO:0042995">
    <property type="term" value="C:cell projection"/>
    <property type="evidence" value="ECO:0007669"/>
    <property type="project" value="UniProtKB-KW"/>
</dbReference>
<dbReference type="GO" id="GO:0005737">
    <property type="term" value="C:cytoplasm"/>
    <property type="evidence" value="ECO:0000314"/>
    <property type="project" value="MGI"/>
</dbReference>
<dbReference type="GO" id="GO:0030659">
    <property type="term" value="C:cytoplasmic vesicle membrane"/>
    <property type="evidence" value="ECO:0000314"/>
    <property type="project" value="MGI"/>
</dbReference>
<dbReference type="GO" id="GO:0005829">
    <property type="term" value="C:cytosol"/>
    <property type="evidence" value="ECO:0000304"/>
    <property type="project" value="Reactome"/>
</dbReference>
<dbReference type="GO" id="GO:0010008">
    <property type="term" value="C:endosome membrane"/>
    <property type="evidence" value="ECO:0007669"/>
    <property type="project" value="UniProtKB-SubCell"/>
</dbReference>
<dbReference type="GO" id="GO:0001650">
    <property type="term" value="C:fibrillar center"/>
    <property type="evidence" value="ECO:0000314"/>
    <property type="project" value="HPA"/>
</dbReference>
<dbReference type="GO" id="GO:0043231">
    <property type="term" value="C:intracellular membrane-bounded organelle"/>
    <property type="evidence" value="ECO:0000314"/>
    <property type="project" value="HPA"/>
</dbReference>
<dbReference type="GO" id="GO:0005765">
    <property type="term" value="C:lysosomal membrane"/>
    <property type="evidence" value="ECO:0007669"/>
    <property type="project" value="UniProtKB-SubCell"/>
</dbReference>
<dbReference type="GO" id="GO:0016020">
    <property type="term" value="C:membrane"/>
    <property type="evidence" value="ECO:0000318"/>
    <property type="project" value="GO_Central"/>
</dbReference>
<dbReference type="GO" id="GO:0005654">
    <property type="term" value="C:nucleoplasm"/>
    <property type="evidence" value="ECO:0000314"/>
    <property type="project" value="HPA"/>
</dbReference>
<dbReference type="GO" id="GO:0005886">
    <property type="term" value="C:plasma membrane"/>
    <property type="evidence" value="ECO:0000314"/>
    <property type="project" value="MGI"/>
</dbReference>
<dbReference type="GO" id="GO:0042734">
    <property type="term" value="C:presynaptic membrane"/>
    <property type="evidence" value="ECO:0007669"/>
    <property type="project" value="UniProtKB-SubCell"/>
</dbReference>
<dbReference type="GO" id="GO:0032991">
    <property type="term" value="C:protein-containing complex"/>
    <property type="evidence" value="ECO:0000314"/>
    <property type="project" value="MGI"/>
</dbReference>
<dbReference type="GO" id="GO:0061630">
    <property type="term" value="F:ubiquitin protein ligase activity"/>
    <property type="evidence" value="ECO:0000314"/>
    <property type="project" value="MGI"/>
</dbReference>
<dbReference type="GO" id="GO:0008270">
    <property type="term" value="F:zinc ion binding"/>
    <property type="evidence" value="ECO:0007669"/>
    <property type="project" value="UniProtKB-KW"/>
</dbReference>
<dbReference type="GO" id="GO:0160177">
    <property type="term" value="P:positive regulation of autophagosome-lysosome fusion"/>
    <property type="evidence" value="ECO:0000316"/>
    <property type="project" value="FlyBase"/>
</dbReference>
<dbReference type="GO" id="GO:0043161">
    <property type="term" value="P:proteasome-mediated ubiquitin-dependent protein catabolic process"/>
    <property type="evidence" value="ECO:0000318"/>
    <property type="project" value="GO_Central"/>
</dbReference>
<dbReference type="GO" id="GO:0070936">
    <property type="term" value="P:protein K48-linked ubiquitination"/>
    <property type="evidence" value="ECO:0000318"/>
    <property type="project" value="GO_Central"/>
</dbReference>
<dbReference type="CDD" id="cd16695">
    <property type="entry name" value="mRING-CH-C4HC2H_ZNRF2"/>
    <property type="match status" value="1"/>
</dbReference>
<dbReference type="FunFam" id="3.30.40.10:FF:000363">
    <property type="entry name" value="E3 ubiquitin-protein ligase ZNRF2"/>
    <property type="match status" value="1"/>
</dbReference>
<dbReference type="Gene3D" id="3.30.160.60">
    <property type="entry name" value="Classic Zinc Finger"/>
    <property type="match status" value="1"/>
</dbReference>
<dbReference type="Gene3D" id="3.30.40.10">
    <property type="entry name" value="Zinc/RING finger domain, C3HC4 (zinc finger)"/>
    <property type="match status" value="1"/>
</dbReference>
<dbReference type="InterPro" id="IPR001841">
    <property type="entry name" value="Znf_RING"/>
</dbReference>
<dbReference type="InterPro" id="IPR013083">
    <property type="entry name" value="Znf_RING/FYVE/PHD"/>
</dbReference>
<dbReference type="InterPro" id="IPR051878">
    <property type="entry name" value="ZNRF_ubiq-protein_ligase"/>
</dbReference>
<dbReference type="PANTHER" id="PTHR46661">
    <property type="entry name" value="E3 UBIQUITIN-PROTEIN LIGASE ZNRF1-LIKE PROTEIN"/>
    <property type="match status" value="1"/>
</dbReference>
<dbReference type="PANTHER" id="PTHR46661:SF3">
    <property type="entry name" value="E3 UBIQUITIN-PROTEIN LIGASE ZNRF2"/>
    <property type="match status" value="1"/>
</dbReference>
<dbReference type="Pfam" id="PF13639">
    <property type="entry name" value="zf-RING_2"/>
    <property type="match status" value="1"/>
</dbReference>
<dbReference type="SMART" id="SM00184">
    <property type="entry name" value="RING"/>
    <property type="match status" value="1"/>
</dbReference>
<dbReference type="SUPFAM" id="SSF57850">
    <property type="entry name" value="RING/U-box"/>
    <property type="match status" value="1"/>
</dbReference>
<dbReference type="PROSITE" id="PS50089">
    <property type="entry name" value="ZF_RING_2"/>
    <property type="match status" value="1"/>
</dbReference>
<protein>
    <recommendedName>
        <fullName>E3 ubiquitin-protein ligase ZNRF2</fullName>
        <ecNumber evidence="7">2.3.2.27</ecNumber>
    </recommendedName>
    <alternativeName>
        <fullName>Protein Ells2</fullName>
    </alternativeName>
    <alternativeName>
        <fullName>RING finger protein 202</fullName>
    </alternativeName>
    <alternativeName>
        <fullName>RING-type E3 ubiquitin transferase ZNRF2</fullName>
    </alternativeName>
    <alternativeName>
        <fullName>Zinc/RING finger protein 2</fullName>
    </alternativeName>
</protein>
<proteinExistence type="evidence at protein level"/>
<accession>Q8NHG8</accession>
<sequence length="242" mass="24115">MGAKQSGPAAANGRTRAYSGSDLPSSSSGGANGTAGGGGGARAAAAGRFPAQVPSAHQPSASGGAAAAAAAPAAPAAPRSRSLGGAVGSVASGARAAQSPFSIPNSSSGPYGSQDSVHSSPEDGGGGRDRPVGGSPGGPRLVIGSLPAHLSPHMFGGFKCPVCSKFVSSDEMDLHLVMCLTKPRITYNEDVLSKDAGECAICLEELQQGDTIARLPCLCIYHKGCIDEWFEVNRSCPEHPSD</sequence>
<name>ZNRF2_HUMAN</name>
<feature type="initiator methionine" description="Removed" evidence="9">
    <location>
        <position position="1"/>
    </location>
</feature>
<feature type="chain" id="PRO_0000277803" description="E3 ubiquitin-protein ligase ZNRF2">
    <location>
        <begin position="2"/>
        <end position="242"/>
    </location>
</feature>
<feature type="zinc finger region" description="RING-type; atypical" evidence="3">
    <location>
        <begin position="199"/>
        <end position="240"/>
    </location>
</feature>
<feature type="region of interest" description="Disordered" evidence="4">
    <location>
        <begin position="1"/>
        <end position="141"/>
    </location>
</feature>
<feature type="compositionally biased region" description="Low complexity" evidence="4">
    <location>
        <begin position="19"/>
        <end position="29"/>
    </location>
</feature>
<feature type="compositionally biased region" description="Gly residues" evidence="4">
    <location>
        <begin position="30"/>
        <end position="41"/>
    </location>
</feature>
<feature type="compositionally biased region" description="Low complexity" evidence="4">
    <location>
        <begin position="59"/>
        <end position="97"/>
    </location>
</feature>
<feature type="compositionally biased region" description="Polar residues" evidence="4">
    <location>
        <begin position="99"/>
        <end position="118"/>
    </location>
</feature>
<feature type="modified residue" description="Phosphoserine" evidence="7">
    <location>
        <position position="19"/>
    </location>
</feature>
<feature type="modified residue" description="Phosphoserine" evidence="2">
    <location>
        <position position="21"/>
    </location>
</feature>
<feature type="modified residue" description="Phosphoserine" evidence="2">
    <location>
        <position position="25"/>
    </location>
</feature>
<feature type="modified residue" description="Phosphoserine" evidence="7 12 13 14 15 16 17">
    <location>
        <position position="82"/>
    </location>
</feature>
<feature type="modified residue" description="Phosphoserine" evidence="17">
    <location>
        <position position="89"/>
    </location>
</feature>
<feature type="modified residue" description="Phosphoserine" evidence="13">
    <location>
        <position position="113"/>
    </location>
</feature>
<feature type="modified residue" description="Phosphoserine" evidence="13">
    <location>
        <position position="116"/>
    </location>
</feature>
<feature type="modified residue" description="Phosphoserine" evidence="11 14 15 16 17">
    <location>
        <position position="135"/>
    </location>
</feature>
<feature type="modified residue" description="Phosphoserine; by MTOR" evidence="7">
    <location>
        <position position="145"/>
    </location>
</feature>
<feature type="modified residue" description="Phosphoserine" evidence="12">
    <location>
        <position position="151"/>
    </location>
</feature>
<feature type="modified residue" description="Phosphoserine" evidence="16">
    <location>
        <position position="193"/>
    </location>
</feature>
<feature type="lipid moiety-binding region" description="N-myristoyl glycine" evidence="7 10">
    <location>
        <position position="2"/>
    </location>
</feature>
<feature type="mutagenesis site" description="Complete loss of binding to ATP1A1." evidence="7">
    <original>G</original>
    <variation>A</variation>
    <location>
        <position position="2"/>
    </location>
</feature>
<feature type="mutagenesis site" description="Counteracts the N-myristoyl-mediated targeting of ZNRF2 to membranes." evidence="7">
    <original>S</original>
    <variation>A</variation>
    <location>
        <position position="19"/>
    </location>
</feature>
<feature type="mutagenesis site" description="Partial decrease of YWHAE binding upon IGF1 stimulation." evidence="7">
    <original>S</original>
    <variation>A</variation>
    <location>
        <position position="82"/>
    </location>
</feature>
<feature type="mutagenesis site" description="Partial decrease of YWHAE binding upon IGF1 stimulation. More distinct membranal localization." evidence="7 8">
    <original>S</original>
    <variation>A</variation>
    <location>
        <position position="145"/>
    </location>
</feature>
<reference key="1">
    <citation type="journal article" date="2003" name="J. Neurosci.">
        <title>ZNRF proteins constitute a family of presynaptic E3 ubiquitin ligases.</title>
        <authorList>
            <person name="Araki T."/>
            <person name="Milbrandt J."/>
        </authorList>
    </citation>
    <scope>NUCLEOTIDE SEQUENCE [MRNA]</scope>
    <scope>FUNCTION</scope>
    <scope>MYRISTOYLATION AT GLY-2</scope>
    <scope>SUBCELLULAR LOCATION</scope>
    <scope>TISSUE SPECIFICITY</scope>
</reference>
<reference key="2">
    <citation type="submission" date="2002-07" db="EMBL/GenBank/DDBJ databases">
        <authorList>
            <person name="Guo J.H."/>
            <person name="Yu L."/>
        </authorList>
    </citation>
    <scope>NUCLEOTIDE SEQUENCE [LARGE SCALE MRNA]</scope>
    <source>
        <tissue>Ovary</tissue>
    </source>
</reference>
<reference key="3">
    <citation type="journal article" date="2006" name="Cell">
        <title>Global, in vivo, and site-specific phosphorylation dynamics in signaling networks.</title>
        <authorList>
            <person name="Olsen J.V."/>
            <person name="Blagoev B."/>
            <person name="Gnad F."/>
            <person name="Macek B."/>
            <person name="Kumar C."/>
            <person name="Mortensen P."/>
            <person name="Mann M."/>
        </authorList>
    </citation>
    <scope>PHOSPHORYLATION [LARGE SCALE ANALYSIS] AT SER-135</scope>
    <scope>IDENTIFICATION BY MASS SPECTROMETRY [LARGE SCALE ANALYSIS]</scope>
    <source>
        <tissue>Cervix carcinoma</tissue>
    </source>
</reference>
<reference key="4">
    <citation type="journal article" date="2006" name="J. Cell. Biochem.">
        <title>The RING finger protein RNF8 recruits UBC13 for lysine 63-based self polyubiquitylation.</title>
        <authorList>
            <person name="Plans V."/>
            <person name="Scheper J."/>
            <person name="Soler M."/>
            <person name="Loukili N."/>
            <person name="Okano Y."/>
            <person name="Thomson T.M."/>
        </authorList>
    </citation>
    <scope>INTERACTION WITH UBE2N</scope>
</reference>
<reference key="5">
    <citation type="journal article" date="2008" name="J. Proteome Res.">
        <title>Combining protein-based IMAC, peptide-based IMAC, and MudPIT for efficient phosphoproteomic analysis.</title>
        <authorList>
            <person name="Cantin G.T."/>
            <person name="Yi W."/>
            <person name="Lu B."/>
            <person name="Park S.K."/>
            <person name="Xu T."/>
            <person name="Lee J.-D."/>
            <person name="Yates J.R. III"/>
        </authorList>
    </citation>
    <scope>IDENTIFICATION BY MASS SPECTROMETRY [LARGE SCALE ANALYSIS]</scope>
    <source>
        <tissue>Cervix carcinoma</tissue>
    </source>
</reference>
<reference key="6">
    <citation type="journal article" date="2008" name="Proc. Natl. Acad. Sci. U.S.A.">
        <title>A quantitative atlas of mitotic phosphorylation.</title>
        <authorList>
            <person name="Dephoure N."/>
            <person name="Zhou C."/>
            <person name="Villen J."/>
            <person name="Beausoleil S.A."/>
            <person name="Bakalarski C.E."/>
            <person name="Elledge S.J."/>
            <person name="Gygi S.P."/>
        </authorList>
    </citation>
    <scope>PHOSPHORYLATION [LARGE SCALE ANALYSIS] AT SER-82 AND SER-151</scope>
    <scope>IDENTIFICATION BY MASS SPECTROMETRY [LARGE SCALE ANALYSIS]</scope>
    <source>
        <tissue>Cervix carcinoma</tissue>
    </source>
</reference>
<reference key="7">
    <citation type="journal article" date="2009" name="Anal. Chem.">
        <title>Lys-N and trypsin cover complementary parts of the phosphoproteome in a refined SCX-based approach.</title>
        <authorList>
            <person name="Gauci S."/>
            <person name="Helbig A.O."/>
            <person name="Slijper M."/>
            <person name="Krijgsveld J."/>
            <person name="Heck A.J."/>
            <person name="Mohammed S."/>
        </authorList>
    </citation>
    <scope>IDENTIFICATION BY MASS SPECTROMETRY [LARGE SCALE ANALYSIS]</scope>
</reference>
<reference key="8">
    <citation type="journal article" date="2009" name="Sci. Signal.">
        <title>Quantitative phosphoproteomic analysis of T cell receptor signaling reveals system-wide modulation of protein-protein interactions.</title>
        <authorList>
            <person name="Mayya V."/>
            <person name="Lundgren D.H."/>
            <person name="Hwang S.-I."/>
            <person name="Rezaul K."/>
            <person name="Wu L."/>
            <person name="Eng J.K."/>
            <person name="Rodionov V."/>
            <person name="Han D.K."/>
        </authorList>
    </citation>
    <scope>PHOSPHORYLATION [LARGE SCALE ANALYSIS] AT SER-82; SER-113 AND SER-116</scope>
    <scope>IDENTIFICATION BY MASS SPECTROMETRY [LARGE SCALE ANALYSIS]</scope>
    <source>
        <tissue>Leukemic T-cell</tissue>
    </source>
</reference>
<reference key="9">
    <citation type="journal article" date="2010" name="Sci. Signal.">
        <title>Quantitative phosphoproteomics reveals widespread full phosphorylation site occupancy during mitosis.</title>
        <authorList>
            <person name="Olsen J.V."/>
            <person name="Vermeulen M."/>
            <person name="Santamaria A."/>
            <person name="Kumar C."/>
            <person name="Miller M.L."/>
            <person name="Jensen L.J."/>
            <person name="Gnad F."/>
            <person name="Cox J."/>
            <person name="Jensen T.S."/>
            <person name="Nigg E.A."/>
            <person name="Brunak S."/>
            <person name="Mann M."/>
        </authorList>
    </citation>
    <scope>PHOSPHORYLATION [LARGE SCALE ANALYSIS] AT SER-82 AND SER-135</scope>
    <scope>IDENTIFICATION BY MASS SPECTROMETRY [LARGE SCALE ANALYSIS]</scope>
    <source>
        <tissue>Cervix carcinoma</tissue>
    </source>
</reference>
<reference key="10">
    <citation type="journal article" date="2011" name="Sci. Signal.">
        <title>System-wide temporal characterization of the proteome and phosphoproteome of human embryonic stem cell differentiation.</title>
        <authorList>
            <person name="Rigbolt K.T."/>
            <person name="Prokhorova T.A."/>
            <person name="Akimov V."/>
            <person name="Henningsen J."/>
            <person name="Johansen P.T."/>
            <person name="Kratchmarova I."/>
            <person name="Kassem M."/>
            <person name="Mann M."/>
            <person name="Olsen J.V."/>
            <person name="Blagoev B."/>
        </authorList>
    </citation>
    <scope>PHOSPHORYLATION [LARGE SCALE ANALYSIS] AT SER-82 AND SER-135</scope>
    <scope>IDENTIFICATION BY MASS SPECTROMETRY [LARGE SCALE ANALYSIS]</scope>
</reference>
<reference key="11">
    <citation type="journal article" date="2012" name="J. Cell Sci.">
        <title>ZNRF2 is released from membranes by growth factors and, together with ZNRF1, regulates the Na+/K+ATPase.</title>
        <authorList>
            <person name="Hoxhaj G."/>
            <person name="Najafov A."/>
            <person name="Toth R."/>
            <person name="Campbell D.G."/>
            <person name="Prescott A.R."/>
            <person name="MacKintosh C."/>
        </authorList>
    </citation>
    <scope>FUNCTION</scope>
    <scope>INTERACTION WITH ZNRF1</scope>
    <scope>MYRISTILATION</scope>
    <scope>SUBCELLULAR LOCATION</scope>
    <scope>MUTAGENESIS OF GLY-2; SER-19; SER-82 AND SER-145</scope>
    <scope>INTERACTION WITH YWHAE</scope>
    <scope>PHOSPHORYLATION AT SER-19; SER-82 AND SER-145</scope>
    <scope>CATALYTIC ACTIVITY</scope>
</reference>
<reference key="12">
    <citation type="journal article" date="2013" name="J. Proteome Res.">
        <title>Toward a comprehensive characterization of a human cancer cell phosphoproteome.</title>
        <authorList>
            <person name="Zhou H."/>
            <person name="Di Palma S."/>
            <person name="Preisinger C."/>
            <person name="Peng M."/>
            <person name="Polat A.N."/>
            <person name="Heck A.J."/>
            <person name="Mohammed S."/>
        </authorList>
    </citation>
    <scope>PHOSPHORYLATION [LARGE SCALE ANALYSIS] AT SER-82; SER-135 AND SER-193</scope>
    <scope>IDENTIFICATION BY MASS SPECTROMETRY [LARGE SCALE ANALYSIS]</scope>
    <source>
        <tissue>Cervix carcinoma</tissue>
        <tissue>Erythroleukemia</tissue>
    </source>
</reference>
<reference key="13">
    <citation type="journal article" date="2014" name="J. Proteomics">
        <title>An enzyme assisted RP-RPLC approach for in-depth analysis of human liver phosphoproteome.</title>
        <authorList>
            <person name="Bian Y."/>
            <person name="Song C."/>
            <person name="Cheng K."/>
            <person name="Dong M."/>
            <person name="Wang F."/>
            <person name="Huang J."/>
            <person name="Sun D."/>
            <person name="Wang L."/>
            <person name="Ye M."/>
            <person name="Zou H."/>
        </authorList>
    </citation>
    <scope>PHOSPHORYLATION [LARGE SCALE ANALYSIS] AT SER-82; SER-89 AND SER-135</scope>
    <scope>IDENTIFICATION BY MASS SPECTROMETRY [LARGE SCALE ANALYSIS]</scope>
    <source>
        <tissue>Liver</tissue>
    </source>
</reference>
<reference key="14">
    <citation type="journal article" date="2016" name="Elife">
        <title>The E3 ubiquitin ligase ZNRF2 is a substrate of mTORC1 and regulates its activation by amino acids.</title>
        <authorList>
            <person name="Hoxhaj G."/>
            <person name="Caddye E."/>
            <person name="Najafov A."/>
            <person name="Houde V.P."/>
            <person name="Johnson C."/>
            <person name="Dissanayake K."/>
            <person name="Toth R."/>
            <person name="Campbell D.G."/>
            <person name="Prescott A.R."/>
            <person name="MacKintosh C."/>
        </authorList>
    </citation>
    <scope>FUNCTION</scope>
    <scope>SUBCELLULAR LOCATION</scope>
    <scope>PHOSPHORYLATION AT SER-145</scope>
    <scope>MUTAGENESIS OF SER-145</scope>
</reference>
<comment type="function">
    <text evidence="5 7 8">E3 ubiquitin-protein ligase that plays a role in the establishment and maintenance of neuronal transmission and plasticity. Ubiquitinates the Na(+)/K(+) ATPase alpha-1 subunit/ATP1A1 and thereby influences its endocytosis and/or degradation (PubMed:22797923). Acts also as a positive regulator of mTORC1 activation by amino acids, which functions upstream of the V-ATPase and of Rag-GTPases (PubMed:27244671). In turn, phosphorylation by mTOR leads to its inhibition via targeting to the cytosol allowing a self-regulating feedback mechanism (PubMed:27244671).</text>
</comment>
<comment type="catalytic activity">
    <reaction evidence="7">
        <text>S-ubiquitinyl-[E2 ubiquitin-conjugating enzyme]-L-cysteine + [acceptor protein]-L-lysine = [E2 ubiquitin-conjugating enzyme]-L-cysteine + N(6)-ubiquitinyl-[acceptor protein]-L-lysine.</text>
        <dbReference type="EC" id="2.3.2.27"/>
    </reaction>
</comment>
<comment type="pathway">
    <text>Protein modification; protein ubiquitination.</text>
</comment>
<comment type="subunit">
    <text evidence="6 7">Interacts with UBE2N (PubMed:16215985). Interacts with ZNRF1 (PubMed:22797923). Interacts (when phosphorylated) with YWHAE (PubMed:22797923).</text>
</comment>
<comment type="subcellular location">
    <subcellularLocation>
        <location evidence="5">Endosome membrane</location>
        <topology evidence="5">Peripheral membrane protein</topology>
    </subcellularLocation>
    <subcellularLocation>
        <location evidence="5">Lysosome membrane</location>
        <topology evidence="5">Peripheral membrane protein</topology>
    </subcellularLocation>
    <subcellularLocation>
        <location evidence="5">Presynaptic cell membrane</location>
        <topology evidence="5">Peripheral membrane protein</topology>
    </subcellularLocation>
    <subcellularLocation>
        <location evidence="8">Cytoplasm</location>
    </subcellularLocation>
</comment>
<comment type="tissue specificity">
    <text evidence="5">Highly expressed in the brain, with higher expression during development than in adult. Expressed also in mammary glands, testis, colon and kidney.</text>
</comment>
<comment type="domain">
    <text evidence="1">The RING-type zinc finger domain is required for E3 ligase activity.</text>
</comment>
<comment type="PTM">
    <text evidence="7 8">Phosphorylated; leading to binding to YWHAE (PubMed:22797923). Phosphorylated by MTOR at Ser-145 and dephosphorylated by PP6C. Ser-145 phosphorylation stimulates vesicle-to-cytosol translocation (PubMed:27244671).</text>
</comment>